<accession>D7PHY9</accession>
<name>VRTK_PENAE</name>
<proteinExistence type="evidence at protein level"/>
<dbReference type="EC" id="1.-.-.-" evidence="4"/>
<dbReference type="EMBL" id="GU574477">
    <property type="protein sequence ID" value="ADI24937.1"/>
    <property type="molecule type" value="Genomic_DNA"/>
</dbReference>
<dbReference type="SMR" id="D7PHY9"/>
<dbReference type="UniPathway" id="UPA00213"/>
<dbReference type="GO" id="GO:0020037">
    <property type="term" value="F:heme binding"/>
    <property type="evidence" value="ECO:0007669"/>
    <property type="project" value="InterPro"/>
</dbReference>
<dbReference type="GO" id="GO:0005506">
    <property type="term" value="F:iron ion binding"/>
    <property type="evidence" value="ECO:0007669"/>
    <property type="project" value="InterPro"/>
</dbReference>
<dbReference type="GO" id="GO:0004497">
    <property type="term" value="F:monooxygenase activity"/>
    <property type="evidence" value="ECO:0007669"/>
    <property type="project" value="UniProtKB-KW"/>
</dbReference>
<dbReference type="GO" id="GO:0016705">
    <property type="term" value="F:oxidoreductase activity, acting on paired donors, with incorporation or reduction of molecular oxygen"/>
    <property type="evidence" value="ECO:0007669"/>
    <property type="project" value="InterPro"/>
</dbReference>
<dbReference type="GO" id="GO:0016114">
    <property type="term" value="P:terpenoid biosynthetic process"/>
    <property type="evidence" value="ECO:0007669"/>
    <property type="project" value="UniProtKB-UniPathway"/>
</dbReference>
<dbReference type="GO" id="GO:0140872">
    <property type="term" value="P:viridicatumtoxin biosynthetic process"/>
    <property type="evidence" value="ECO:0000314"/>
    <property type="project" value="GO_Central"/>
</dbReference>
<dbReference type="CDD" id="cd11058">
    <property type="entry name" value="CYP60B-like"/>
    <property type="match status" value="1"/>
</dbReference>
<dbReference type="Gene3D" id="1.10.630.10">
    <property type="entry name" value="Cytochrome P450"/>
    <property type="match status" value="1"/>
</dbReference>
<dbReference type="InterPro" id="IPR001128">
    <property type="entry name" value="Cyt_P450"/>
</dbReference>
<dbReference type="InterPro" id="IPR002401">
    <property type="entry name" value="Cyt_P450_E_grp-I"/>
</dbReference>
<dbReference type="InterPro" id="IPR036396">
    <property type="entry name" value="Cyt_P450_sf"/>
</dbReference>
<dbReference type="InterPro" id="IPR050121">
    <property type="entry name" value="Cytochrome_P450_monoxygenase"/>
</dbReference>
<dbReference type="PANTHER" id="PTHR24305:SF29">
    <property type="entry name" value="BENZOATE-PARA-HYDROXYLASE"/>
    <property type="match status" value="1"/>
</dbReference>
<dbReference type="PANTHER" id="PTHR24305">
    <property type="entry name" value="CYTOCHROME P450"/>
    <property type="match status" value="1"/>
</dbReference>
<dbReference type="Pfam" id="PF00067">
    <property type="entry name" value="p450"/>
    <property type="match status" value="1"/>
</dbReference>
<dbReference type="PRINTS" id="PR00463">
    <property type="entry name" value="EP450I"/>
</dbReference>
<dbReference type="PRINTS" id="PR00385">
    <property type="entry name" value="P450"/>
</dbReference>
<dbReference type="SUPFAM" id="SSF48264">
    <property type="entry name" value="Cytochrome P450"/>
    <property type="match status" value="1"/>
</dbReference>
<organism>
    <name type="scientific">Penicillium aethiopicum</name>
    <dbReference type="NCBI Taxonomy" id="36650"/>
    <lineage>
        <taxon>Eukaryota</taxon>
        <taxon>Fungi</taxon>
        <taxon>Dikarya</taxon>
        <taxon>Ascomycota</taxon>
        <taxon>Pezizomycotina</taxon>
        <taxon>Eurotiomycetes</taxon>
        <taxon>Eurotiomycetidae</taxon>
        <taxon>Eurotiales</taxon>
        <taxon>Aspergillaceae</taxon>
        <taxon>Penicillium</taxon>
    </lineage>
</organism>
<keyword id="KW-0349">Heme</keyword>
<keyword id="KW-0408">Iron</keyword>
<keyword id="KW-0479">Metal-binding</keyword>
<keyword id="KW-0503">Monooxygenase</keyword>
<keyword id="KW-0560">Oxidoreductase</keyword>
<feature type="chain" id="PRO_0000436826" description="Cytochrome P450 monooxygenase vrtK">
    <location>
        <begin position="1"/>
        <end position="534"/>
    </location>
</feature>
<feature type="binding site" description="axial binding residue" evidence="1">
    <location>
        <position position="448"/>
    </location>
    <ligand>
        <name>heme</name>
        <dbReference type="ChEBI" id="CHEBI:30413"/>
    </ligand>
    <ligandPart>
        <name>Fe</name>
        <dbReference type="ChEBI" id="CHEBI:18248"/>
    </ligandPart>
</feature>
<sequence>MAFSTYLGSLESSLVLKGLAGVWLVWYIGRVFYNIFLHPLANVPGPLLCKFSKIPWDYWQWTGRLPQNTAKVHAKYGEIVRIGPNELSFTNNAAWNDIFAKVPGRAQWPRHPKRVPQGKNGPQSIMNTAGTYHARFRRLLNHAFSEKGLQEQQDLITKYIDIFVSKVDGFARTGQSLDVTKWFVMVGFDVISDLGWSEPFNCVENGEVHEWMKTFAETAFDTQLKFLFRERGLMFLAPYLVPMKLQLARLNNFKYARARVEERIKTGGTRGDFWDKISVKSAGDNASGEGLTKEEMVVAAVTLVGTGSHTISTLLTGLAYFLGTNPHTMKKLVDEIRTSFNSPEEIDLVSVHKLKYLTACLNETMRLYPPVINMLWRTPPQGGGHASGIFIPEGTGCNMSFFGIAQNPDYFTRPLDFCPERFLPDPPAEFRDDNHEAYHPFSLGAYNCLGQNLANAESRLIMTKLLWYFDFELDGTVDKDWLDQKSYGVFIKKELPVKFHPGPNAVRHVANGNGVATNGHANGHANGHARINTK</sequence>
<protein>
    <recommendedName>
        <fullName evidence="6">Cytochrome P450 monooxygenase vrtK</fullName>
        <ecNumber evidence="4">1.-.-.-</ecNumber>
    </recommendedName>
    <alternativeName>
        <fullName evidence="6">Viridicatumtoxin synthesis protein K</fullName>
    </alternativeName>
</protein>
<evidence type="ECO:0000250" key="1">
    <source>
        <dbReference type="UniProtKB" id="P04798"/>
    </source>
</evidence>
<evidence type="ECO:0000269" key="2">
    <source>
    </source>
</evidence>
<evidence type="ECO:0000269" key="3">
    <source>
    </source>
</evidence>
<evidence type="ECO:0000269" key="4">
    <source>
    </source>
</evidence>
<evidence type="ECO:0000269" key="5">
    <source>
    </source>
</evidence>
<evidence type="ECO:0000303" key="6">
    <source>
    </source>
</evidence>
<evidence type="ECO:0000305" key="7"/>
<reference key="1">
    <citation type="journal article" date="2010" name="Chem. Biol.">
        <title>Identification of the viridicatumtoxin and griseofulvin gene clusters from Penicillium aethiopicum.</title>
        <authorList>
            <person name="Chooi Y.H."/>
            <person name="Cacho R."/>
            <person name="Tang Y."/>
        </authorList>
    </citation>
    <scope>NUCLEOTIDE SEQUENCE [GENOMIC DNA]</scope>
    <scope>FUNCTION</scope>
    <source>
        <strain>IBT 5753</strain>
    </source>
</reference>
<reference key="2">
    <citation type="journal article" date="2008" name="J. Antibiot.">
        <title>Viridicatumtoxin B, a new anti-MRSA agent from Penicillium sp. FR11.</title>
        <authorList>
            <person name="Zheng C.J."/>
            <person name="Yu H.E."/>
            <person name="Kim E.H."/>
            <person name="Kim W.G."/>
        </authorList>
    </citation>
    <scope>BIOTECHNOLOGY</scope>
</reference>
<reference key="3">
    <citation type="journal article" date="2013" name="J. Am. Chem. Soc.">
        <title>A cytochrome P450 serves as an unexpected terpene cyclase during fungal meroterpenoid biosynthesis.</title>
        <authorList>
            <person name="Chooi Y.H."/>
            <person name="Hong Y.J."/>
            <person name="Cacho R.A."/>
            <person name="Tantillo D.J."/>
            <person name="Tang Y."/>
        </authorList>
    </citation>
    <scope>FUNCTION</scope>
    <scope>DISRUPTION PHENOTYPE</scope>
    <scope>CATALYTIC ACTIVITY</scope>
</reference>
<reference key="4">
    <citation type="journal article" date="2016" name="J. Antibiot.">
        <title>Inhibition of bacterial undecaprenyl pyrophosphate synthase by small fungal molecules.</title>
        <authorList>
            <person name="Inokoshi J."/>
            <person name="Nakamura Y."/>
            <person name="Komada S."/>
            <person name="Komatsu K."/>
            <person name="Umeyama H."/>
            <person name="Tomoda H."/>
        </authorList>
    </citation>
    <scope>BIOTECHNOLOGY</scope>
</reference>
<gene>
    <name evidence="6" type="primary">vrtK</name>
</gene>
<comment type="function">
    <text evidence="3 4">Cytochrome P450 monooxygenase; part of the gene cluster that mediates the biosynthesis of viridicatumtoxin, a tetracycline-like fungal meroterpenoid with a unique, fused spirobicyclic ring system (PubMed:20534346). The first step of the pathway is the production of the malonamoyl-CoA starter unit for the polyketide synthase vrtA (PubMed:20534346). The aldolase vrtJ may be involved in the synthesis of the malonamate substrate for malonamoyl-CoA synthetase vrtB (PubMed:20534346). The polyketide synthase vrtA then may utilize the malonamoyl-CoA starter unit, followed by sequential condensation of eight malonyl-CoA units to form the polyketide backbone (PubMed:20534346). The cyclization of the last ring could be mediated by the lactamase-like protein vrtG (PubMed:20534346). The proposed post-PKS tailoring steps are a hydroxylation at C5 catalyzed the cytochrome P450 monooxygenase vrtE, a hydroxylation at C12a catalyzed by VrtH and/or VrtI, and an O-methylation by the O-methyltransferase vrtF (PubMed:20534346, PubMed:24161266). VrtC is then proposed to catalyze the transfer of a geranyl group synthesized by vrtD to the aromatic C ring of the tetracyclic polyketide intermediate of viridicatumtoxin to yield previridicatumtoxin (PubMed:20534346). Finally, the cytochrome P450 monooxygenase vrtK catalyzes the spirocyclization of the geranyl moiety of previridicatumtoxin to afford viridicatumtoxin (PubMed:24161266).</text>
</comment>
<comment type="cofactor">
    <cofactor evidence="1">
        <name>heme</name>
        <dbReference type="ChEBI" id="CHEBI:30413"/>
    </cofactor>
</comment>
<comment type="pathway">
    <text evidence="3">Secondary metabolite biosynthesis; terpenoid biosynthesis.</text>
</comment>
<comment type="disruption phenotype">
    <text evidence="4">Impairs the production of viridicatumtoxin, but accumulates previridicatumtoxin (PubMed:24161266).</text>
</comment>
<comment type="biotechnology">
    <text evidence="2 5">Viridicatumtoxin and its derivative, viridicatumtoxin B, exhibit anti-methicillin-resistant Staphylococcus aureus (anti-MRSA) activity (PubMed:19168978). Moreover, viridicatumtoxin and a C2 acetyl analog, spirohexaline, have been demonstrated to inhibit bacterial undecaprenyl diphosphate synthase, a potential new target for antibiotic development (PubMed:27049441).</text>
</comment>
<comment type="similarity">
    <text evidence="7">Belongs to the cytochrome P450 family.</text>
</comment>